<accession>Q32KX9</accession>
<sequence length="126" mass="14666">MASEDVTITVRLIRSFEHRNFRPVVYHGVHLDQTVKDFIVFLKQDIPLRASLPPPFRNYKYDKLKIVHQAHKSKTNELVLSLEDDDRLLLKEDSTLKAAGIASETEIAFFCEEDYKNYKANPISSW</sequence>
<protein>
    <recommendedName>
        <fullName>UPF0538 protein C2orf76 homolog</fullName>
    </recommendedName>
</protein>
<organism>
    <name type="scientific">Bos taurus</name>
    <name type="common">Bovine</name>
    <dbReference type="NCBI Taxonomy" id="9913"/>
    <lineage>
        <taxon>Eukaryota</taxon>
        <taxon>Metazoa</taxon>
        <taxon>Chordata</taxon>
        <taxon>Craniata</taxon>
        <taxon>Vertebrata</taxon>
        <taxon>Euteleostomi</taxon>
        <taxon>Mammalia</taxon>
        <taxon>Eutheria</taxon>
        <taxon>Laurasiatheria</taxon>
        <taxon>Artiodactyla</taxon>
        <taxon>Ruminantia</taxon>
        <taxon>Pecora</taxon>
        <taxon>Bovidae</taxon>
        <taxon>Bovinae</taxon>
        <taxon>Bos</taxon>
    </lineage>
</organism>
<proteinExistence type="evidence at transcript level"/>
<reference key="1">
    <citation type="submission" date="2005-11" db="EMBL/GenBank/DDBJ databases">
        <authorList>
            <consortium name="NIH - Mammalian Gene Collection (MGC) project"/>
        </authorList>
    </citation>
    <scope>NUCLEOTIDE SEQUENCE [LARGE SCALE MRNA]</scope>
    <source>
        <strain>Crossbred X Angus</strain>
        <tissue>Liver</tissue>
    </source>
</reference>
<evidence type="ECO:0000305" key="1"/>
<keyword id="KW-1185">Reference proteome</keyword>
<comment type="similarity">
    <text evidence="1">Belongs to the UPF0538 family.</text>
</comment>
<feature type="chain" id="PRO_0000325823" description="UPF0538 protein C2orf76 homolog">
    <location>
        <begin position="1"/>
        <end position="126"/>
    </location>
</feature>
<name>CB076_BOVIN</name>
<dbReference type="EMBL" id="BC109869">
    <property type="protein sequence ID" value="AAI09870.1"/>
    <property type="molecule type" value="mRNA"/>
</dbReference>
<dbReference type="RefSeq" id="NP_001032707.1">
    <property type="nucleotide sequence ID" value="NM_001037618.2"/>
</dbReference>
<dbReference type="RefSeq" id="XP_015313648.2">
    <property type="nucleotide sequence ID" value="XM_015458162.3"/>
</dbReference>
<dbReference type="RefSeq" id="XP_024833223.1">
    <property type="nucleotide sequence ID" value="XM_024977455.2"/>
</dbReference>
<dbReference type="RefSeq" id="XP_059732414.1">
    <property type="nucleotide sequence ID" value="XM_059876431.1"/>
</dbReference>
<dbReference type="FunCoup" id="Q32KX9">
    <property type="interactions" value="1650"/>
</dbReference>
<dbReference type="PaxDb" id="9913-ENSBTAP00000014020"/>
<dbReference type="GeneID" id="613457"/>
<dbReference type="KEGG" id="bta:613457"/>
<dbReference type="CTD" id="613457"/>
<dbReference type="eggNOG" id="KOG4147">
    <property type="taxonomic scope" value="Eukaryota"/>
</dbReference>
<dbReference type="HOGENOM" id="CLU_117792_1_0_1"/>
<dbReference type="InParanoid" id="Q32KX9"/>
<dbReference type="OrthoDB" id="937at2759"/>
<dbReference type="TreeFam" id="TF300221"/>
<dbReference type="Proteomes" id="UP000009136">
    <property type="component" value="Unplaced"/>
</dbReference>
<dbReference type="InterPro" id="IPR018794">
    <property type="entry name" value="UPF0538"/>
</dbReference>
<dbReference type="PANTHER" id="PTHR18444">
    <property type="entry name" value="UPF0538 FAMILY MEMBER"/>
    <property type="match status" value="1"/>
</dbReference>
<dbReference type="PANTHER" id="PTHR18444:SF9">
    <property type="entry name" value="UPF0538 PROTEIN C2ORF76"/>
    <property type="match status" value="1"/>
</dbReference>
<dbReference type="Pfam" id="PF10209">
    <property type="entry name" value="DUF2340"/>
    <property type="match status" value="1"/>
</dbReference>